<reference key="1">
    <citation type="journal article" date="2003" name="J. Bacteriol.">
        <title>Comparative analyses of the complete genome sequences of Pierce's disease and citrus variegated chlorosis strains of Xylella fastidiosa.</title>
        <authorList>
            <person name="Van Sluys M.A."/>
            <person name="de Oliveira M.C."/>
            <person name="Monteiro-Vitorello C.B."/>
            <person name="Miyaki C.Y."/>
            <person name="Furlan L.R."/>
            <person name="Camargo L.E.A."/>
            <person name="da Silva A.C.R."/>
            <person name="Moon D.H."/>
            <person name="Takita M.A."/>
            <person name="Lemos E.G.M."/>
            <person name="Machado M.A."/>
            <person name="Ferro M.I.T."/>
            <person name="da Silva F.R."/>
            <person name="Goldman M.H.S."/>
            <person name="Goldman G.H."/>
            <person name="Lemos M.V.F."/>
            <person name="El-Dorry H."/>
            <person name="Tsai S.M."/>
            <person name="Carrer H."/>
            <person name="Carraro D.M."/>
            <person name="de Oliveira R.C."/>
            <person name="Nunes L.R."/>
            <person name="Siqueira W.J."/>
            <person name="Coutinho L.L."/>
            <person name="Kimura E.T."/>
            <person name="Ferro E.S."/>
            <person name="Harakava R."/>
            <person name="Kuramae E.E."/>
            <person name="Marino C.L."/>
            <person name="Giglioti E."/>
            <person name="Abreu I.L."/>
            <person name="Alves L.M.C."/>
            <person name="do Amaral A.M."/>
            <person name="Baia G.S."/>
            <person name="Blanco S.R."/>
            <person name="Brito M.S."/>
            <person name="Cannavan F.S."/>
            <person name="Celestino A.V."/>
            <person name="da Cunha A.F."/>
            <person name="Fenille R.C."/>
            <person name="Ferro J.A."/>
            <person name="Formighieri E.F."/>
            <person name="Kishi L.T."/>
            <person name="Leoni S.G."/>
            <person name="Oliveira A.R."/>
            <person name="Rosa V.E. Jr."/>
            <person name="Sassaki F.T."/>
            <person name="Sena J.A.D."/>
            <person name="de Souza A.A."/>
            <person name="Truffi D."/>
            <person name="Tsukumo F."/>
            <person name="Yanai G.M."/>
            <person name="Zaros L.G."/>
            <person name="Civerolo E.L."/>
            <person name="Simpson A.J.G."/>
            <person name="Almeida N.F. Jr."/>
            <person name="Setubal J.C."/>
            <person name="Kitajima J.P."/>
        </authorList>
    </citation>
    <scope>NUCLEOTIDE SEQUENCE [LARGE SCALE GENOMIC DNA]</scope>
    <source>
        <strain>Temecula1 / ATCC 700964</strain>
    </source>
</reference>
<organism>
    <name type="scientific">Xylella fastidiosa (strain Temecula1 / ATCC 700964)</name>
    <dbReference type="NCBI Taxonomy" id="183190"/>
    <lineage>
        <taxon>Bacteria</taxon>
        <taxon>Pseudomonadati</taxon>
        <taxon>Pseudomonadota</taxon>
        <taxon>Gammaproteobacteria</taxon>
        <taxon>Lysobacterales</taxon>
        <taxon>Lysobacteraceae</taxon>
        <taxon>Xylella</taxon>
    </lineage>
</organism>
<proteinExistence type="inferred from homology"/>
<feature type="chain" id="PRO_0000381151" description="8-amino-7-oxononanoate synthase">
    <location>
        <begin position="1"/>
        <end position="401"/>
    </location>
</feature>
<feature type="binding site" evidence="1">
    <location>
        <position position="24"/>
    </location>
    <ligand>
        <name>substrate</name>
    </ligand>
</feature>
<feature type="binding site" evidence="1">
    <location>
        <begin position="111"/>
        <end position="112"/>
    </location>
    <ligand>
        <name>pyridoxal 5'-phosphate</name>
        <dbReference type="ChEBI" id="CHEBI:597326"/>
    </ligand>
</feature>
<feature type="binding site" evidence="1">
    <location>
        <position position="137"/>
    </location>
    <ligand>
        <name>substrate</name>
    </ligand>
</feature>
<feature type="binding site" evidence="1">
    <location>
        <position position="183"/>
    </location>
    <ligand>
        <name>pyridoxal 5'-phosphate</name>
        <dbReference type="ChEBI" id="CHEBI:597326"/>
    </ligand>
</feature>
<feature type="binding site" evidence="1">
    <location>
        <position position="211"/>
    </location>
    <ligand>
        <name>pyridoxal 5'-phosphate</name>
        <dbReference type="ChEBI" id="CHEBI:597326"/>
    </ligand>
</feature>
<feature type="binding site" evidence="1">
    <location>
        <position position="240"/>
    </location>
    <ligand>
        <name>pyridoxal 5'-phosphate</name>
        <dbReference type="ChEBI" id="CHEBI:597326"/>
    </ligand>
</feature>
<feature type="binding site" evidence="1">
    <location>
        <position position="357"/>
    </location>
    <ligand>
        <name>substrate</name>
    </ligand>
</feature>
<feature type="modified residue" description="N6-(pyridoxal phosphate)lysine" evidence="1">
    <location>
        <position position="243"/>
    </location>
</feature>
<name>BIOF_XYLFT</name>
<accession>Q87DT2</accession>
<sequence length="401" mass="43890">MTRPDLNERILSLRKLRLAQCRTRTRRTIERRNGVRLEINGSWLVEFCSNDYLGLAQHFEIIAALQDAAARNGIGATASHLICGHHAIHKALEYELAEWLGYPRALLFGSGFTANLAVQQALLTKENDICVQDRLNHASLIDATRLAGCRLRRYPHLDVDGAAHQLKNAPEGAAMLATDGIFSMDGDIAPLRALSLVARTQQALMYVDDAHGIGVTGPQGRGCIAAAWLSVEEVPLQLVTLSKALGGYGAAVLGSATLIQHLAETARPYIYTTALPPAQAAAALTAIRIARRDEWRRQRLQELVERFRENSRRHGLEIMDSETPIQPLQCGDETTTMAMSAALEREGFLVNAIRPPTVPEGKSRLRVTLSALHTTEQIDTLVQALARSRDALATEAAPVKV</sequence>
<dbReference type="EC" id="2.3.1.47" evidence="1"/>
<dbReference type="EMBL" id="AE009442">
    <property type="protein sequence ID" value="AAO28471.1"/>
    <property type="molecule type" value="Genomic_DNA"/>
</dbReference>
<dbReference type="RefSeq" id="WP_004090644.1">
    <property type="nucleotide sequence ID" value="NC_004556.1"/>
</dbReference>
<dbReference type="SMR" id="Q87DT2"/>
<dbReference type="GeneID" id="93904313"/>
<dbReference type="KEGG" id="xft:PD_0598"/>
<dbReference type="HOGENOM" id="CLU_015846_11_2_6"/>
<dbReference type="UniPathway" id="UPA00078"/>
<dbReference type="Proteomes" id="UP000002516">
    <property type="component" value="Chromosome"/>
</dbReference>
<dbReference type="GO" id="GO:0008710">
    <property type="term" value="F:8-amino-7-oxononanoate synthase activity"/>
    <property type="evidence" value="ECO:0007669"/>
    <property type="project" value="UniProtKB-UniRule"/>
</dbReference>
<dbReference type="GO" id="GO:0030170">
    <property type="term" value="F:pyridoxal phosphate binding"/>
    <property type="evidence" value="ECO:0007669"/>
    <property type="project" value="UniProtKB-UniRule"/>
</dbReference>
<dbReference type="GO" id="GO:0009102">
    <property type="term" value="P:biotin biosynthetic process"/>
    <property type="evidence" value="ECO:0007669"/>
    <property type="project" value="UniProtKB-UniRule"/>
</dbReference>
<dbReference type="Gene3D" id="3.90.1150.10">
    <property type="entry name" value="Aspartate Aminotransferase, domain 1"/>
    <property type="match status" value="1"/>
</dbReference>
<dbReference type="Gene3D" id="3.40.640.10">
    <property type="entry name" value="Type I PLP-dependent aspartate aminotransferase-like (Major domain)"/>
    <property type="match status" value="1"/>
</dbReference>
<dbReference type="HAMAP" id="MF_01693">
    <property type="entry name" value="BioF_aminotrans_2"/>
    <property type="match status" value="1"/>
</dbReference>
<dbReference type="InterPro" id="IPR001917">
    <property type="entry name" value="Aminotrans_II_pyridoxalP_BS"/>
</dbReference>
<dbReference type="InterPro" id="IPR004839">
    <property type="entry name" value="Aminotransferase_I/II_large"/>
</dbReference>
<dbReference type="InterPro" id="IPR050087">
    <property type="entry name" value="AON_synthase_class-II"/>
</dbReference>
<dbReference type="InterPro" id="IPR004723">
    <property type="entry name" value="AONS_Archaea/Proteobacteria"/>
</dbReference>
<dbReference type="InterPro" id="IPR022834">
    <property type="entry name" value="AONS_Proteobacteria"/>
</dbReference>
<dbReference type="InterPro" id="IPR015424">
    <property type="entry name" value="PyrdxlP-dep_Trfase"/>
</dbReference>
<dbReference type="InterPro" id="IPR015421">
    <property type="entry name" value="PyrdxlP-dep_Trfase_major"/>
</dbReference>
<dbReference type="InterPro" id="IPR015422">
    <property type="entry name" value="PyrdxlP-dep_Trfase_small"/>
</dbReference>
<dbReference type="NCBIfam" id="TIGR00858">
    <property type="entry name" value="bioF"/>
    <property type="match status" value="1"/>
</dbReference>
<dbReference type="PANTHER" id="PTHR13693:SF100">
    <property type="entry name" value="8-AMINO-7-OXONONANOATE SYNTHASE"/>
    <property type="match status" value="1"/>
</dbReference>
<dbReference type="PANTHER" id="PTHR13693">
    <property type="entry name" value="CLASS II AMINOTRANSFERASE/8-AMINO-7-OXONONANOATE SYNTHASE"/>
    <property type="match status" value="1"/>
</dbReference>
<dbReference type="Pfam" id="PF00155">
    <property type="entry name" value="Aminotran_1_2"/>
    <property type="match status" value="1"/>
</dbReference>
<dbReference type="SUPFAM" id="SSF53383">
    <property type="entry name" value="PLP-dependent transferases"/>
    <property type="match status" value="1"/>
</dbReference>
<dbReference type="PROSITE" id="PS00599">
    <property type="entry name" value="AA_TRANSFER_CLASS_2"/>
    <property type="match status" value="1"/>
</dbReference>
<gene>
    <name evidence="1" type="primary">bioF</name>
    <name type="ordered locus">PD_0598</name>
</gene>
<comment type="function">
    <text evidence="1">Catalyzes the decarboxylative condensation of pimeloyl-[acyl-carrier protein] and L-alanine to produce 8-amino-7-oxononanoate (AON), [acyl-carrier protein], and carbon dioxide.</text>
</comment>
<comment type="catalytic activity">
    <reaction evidence="1">
        <text>6-carboxyhexanoyl-[ACP] + L-alanine + H(+) = (8S)-8-amino-7-oxononanoate + holo-[ACP] + CO2</text>
        <dbReference type="Rhea" id="RHEA:42288"/>
        <dbReference type="Rhea" id="RHEA-COMP:9685"/>
        <dbReference type="Rhea" id="RHEA-COMP:9955"/>
        <dbReference type="ChEBI" id="CHEBI:15378"/>
        <dbReference type="ChEBI" id="CHEBI:16526"/>
        <dbReference type="ChEBI" id="CHEBI:57972"/>
        <dbReference type="ChEBI" id="CHEBI:64479"/>
        <dbReference type="ChEBI" id="CHEBI:78846"/>
        <dbReference type="ChEBI" id="CHEBI:149468"/>
        <dbReference type="EC" id="2.3.1.47"/>
    </reaction>
</comment>
<comment type="cofactor">
    <cofactor evidence="1">
        <name>pyridoxal 5'-phosphate</name>
        <dbReference type="ChEBI" id="CHEBI:597326"/>
    </cofactor>
</comment>
<comment type="pathway">
    <text evidence="1">Cofactor biosynthesis; biotin biosynthesis.</text>
</comment>
<comment type="subunit">
    <text evidence="1">Homodimer.</text>
</comment>
<comment type="similarity">
    <text evidence="1">Belongs to the class-II pyridoxal-phosphate-dependent aminotransferase family. BioF subfamily.</text>
</comment>
<evidence type="ECO:0000255" key="1">
    <source>
        <dbReference type="HAMAP-Rule" id="MF_01693"/>
    </source>
</evidence>
<keyword id="KW-0093">Biotin biosynthesis</keyword>
<keyword id="KW-0663">Pyridoxal phosphate</keyword>
<keyword id="KW-1185">Reference proteome</keyword>
<keyword id="KW-0808">Transferase</keyword>
<protein>
    <recommendedName>
        <fullName evidence="1">8-amino-7-oxononanoate synthase</fullName>
        <shortName evidence="1">AONS</shortName>
        <ecNumber evidence="1">2.3.1.47</ecNumber>
    </recommendedName>
    <alternativeName>
        <fullName evidence="1">7-keto-8-amino-pelargonic acid synthase</fullName>
        <shortName evidence="1">7-KAP synthase</shortName>
        <shortName evidence="1">KAPA synthase</shortName>
    </alternativeName>
    <alternativeName>
        <fullName evidence="1">8-amino-7-ketopelargonate synthase</fullName>
    </alternativeName>
</protein>